<reference key="1">
    <citation type="submission" date="2006-08" db="EMBL/GenBank/DDBJ databases">
        <title>Complete sequence of chromosome 1 of Burkholderia cepacia AMMD.</title>
        <authorList>
            <person name="Copeland A."/>
            <person name="Lucas S."/>
            <person name="Lapidus A."/>
            <person name="Barry K."/>
            <person name="Detter J.C."/>
            <person name="Glavina del Rio T."/>
            <person name="Hammon N."/>
            <person name="Israni S."/>
            <person name="Pitluck S."/>
            <person name="Bruce D."/>
            <person name="Chain P."/>
            <person name="Malfatti S."/>
            <person name="Shin M."/>
            <person name="Vergez L."/>
            <person name="Schmutz J."/>
            <person name="Larimer F."/>
            <person name="Land M."/>
            <person name="Hauser L."/>
            <person name="Kyrpides N."/>
            <person name="Kim E."/>
            <person name="Parke J."/>
            <person name="Coenye T."/>
            <person name="Konstantinidis K."/>
            <person name="Ramette A."/>
            <person name="Tiedje J."/>
            <person name="Richardson P."/>
        </authorList>
    </citation>
    <scope>NUCLEOTIDE SEQUENCE [LARGE SCALE GENOMIC DNA]</scope>
    <source>
        <strain>ATCC BAA-244 / DSM 16087 / CCUG 44356 / LMG 19182 / AMMD</strain>
    </source>
</reference>
<feature type="chain" id="PRO_1000001728" description="Phosphate acyltransferase">
    <location>
        <begin position="1"/>
        <end position="368"/>
    </location>
</feature>
<feature type="region of interest" description="Disordered" evidence="2">
    <location>
        <begin position="338"/>
        <end position="368"/>
    </location>
</feature>
<protein>
    <recommendedName>
        <fullName evidence="1">Phosphate acyltransferase</fullName>
        <ecNumber evidence="1">2.3.1.274</ecNumber>
    </recommendedName>
    <alternativeName>
        <fullName evidence="1">Acyl-ACP phosphotransacylase</fullName>
    </alternativeName>
    <alternativeName>
        <fullName evidence="1">Acyl-[acyl-carrier-protein]--phosphate acyltransferase</fullName>
    </alternativeName>
    <alternativeName>
        <fullName evidence="1">Phosphate-acyl-ACP acyltransferase</fullName>
    </alternativeName>
</protein>
<keyword id="KW-0963">Cytoplasm</keyword>
<keyword id="KW-0444">Lipid biosynthesis</keyword>
<keyword id="KW-0443">Lipid metabolism</keyword>
<keyword id="KW-0594">Phospholipid biosynthesis</keyword>
<keyword id="KW-1208">Phospholipid metabolism</keyword>
<keyword id="KW-0808">Transferase</keyword>
<accession>Q0BH18</accession>
<organism>
    <name type="scientific">Burkholderia ambifaria (strain ATCC BAA-244 / DSM 16087 / CCUG 44356 / LMG 19182 / AMMD)</name>
    <name type="common">Burkholderia cepacia (strain AMMD)</name>
    <dbReference type="NCBI Taxonomy" id="339670"/>
    <lineage>
        <taxon>Bacteria</taxon>
        <taxon>Pseudomonadati</taxon>
        <taxon>Pseudomonadota</taxon>
        <taxon>Betaproteobacteria</taxon>
        <taxon>Burkholderiales</taxon>
        <taxon>Burkholderiaceae</taxon>
        <taxon>Burkholderia</taxon>
        <taxon>Burkholderia cepacia complex</taxon>
    </lineage>
</organism>
<comment type="function">
    <text evidence="1">Catalyzes the reversible formation of acyl-phosphate (acyl-PO(4)) from acyl-[acyl-carrier-protein] (acyl-ACP). This enzyme utilizes acyl-ACP as fatty acyl donor, but not acyl-CoA.</text>
</comment>
<comment type="catalytic activity">
    <reaction evidence="1">
        <text>a fatty acyl-[ACP] + phosphate = an acyl phosphate + holo-[ACP]</text>
        <dbReference type="Rhea" id="RHEA:42292"/>
        <dbReference type="Rhea" id="RHEA-COMP:9685"/>
        <dbReference type="Rhea" id="RHEA-COMP:14125"/>
        <dbReference type="ChEBI" id="CHEBI:43474"/>
        <dbReference type="ChEBI" id="CHEBI:59918"/>
        <dbReference type="ChEBI" id="CHEBI:64479"/>
        <dbReference type="ChEBI" id="CHEBI:138651"/>
        <dbReference type="EC" id="2.3.1.274"/>
    </reaction>
</comment>
<comment type="pathway">
    <text evidence="1">Lipid metabolism; phospholipid metabolism.</text>
</comment>
<comment type="subunit">
    <text evidence="1">Homodimer. Probably interacts with PlsY.</text>
</comment>
<comment type="subcellular location">
    <subcellularLocation>
        <location evidence="1">Cytoplasm</location>
    </subcellularLocation>
    <text evidence="1">Associated with the membrane possibly through PlsY.</text>
</comment>
<comment type="similarity">
    <text evidence="1">Belongs to the PlsX family.</text>
</comment>
<proteinExistence type="inferred from homology"/>
<name>PLSX_BURCM</name>
<evidence type="ECO:0000255" key="1">
    <source>
        <dbReference type="HAMAP-Rule" id="MF_00019"/>
    </source>
</evidence>
<evidence type="ECO:0000256" key="2">
    <source>
        <dbReference type="SAM" id="MobiDB-lite"/>
    </source>
</evidence>
<dbReference type="EC" id="2.3.1.274" evidence="1"/>
<dbReference type="EMBL" id="CP000440">
    <property type="protein sequence ID" value="ABI86555.1"/>
    <property type="molecule type" value="Genomic_DNA"/>
</dbReference>
<dbReference type="RefSeq" id="WP_011656342.1">
    <property type="nucleotide sequence ID" value="NZ_CP009798.1"/>
</dbReference>
<dbReference type="SMR" id="Q0BH18"/>
<dbReference type="GeneID" id="93083595"/>
<dbReference type="KEGG" id="bam:Bamb_0996"/>
<dbReference type="PATRIC" id="fig|339670.21.peg.576"/>
<dbReference type="eggNOG" id="COG0416">
    <property type="taxonomic scope" value="Bacteria"/>
</dbReference>
<dbReference type="UniPathway" id="UPA00085"/>
<dbReference type="Proteomes" id="UP000000662">
    <property type="component" value="Chromosome 1"/>
</dbReference>
<dbReference type="GO" id="GO:0005737">
    <property type="term" value="C:cytoplasm"/>
    <property type="evidence" value="ECO:0007669"/>
    <property type="project" value="UniProtKB-SubCell"/>
</dbReference>
<dbReference type="GO" id="GO:0043811">
    <property type="term" value="F:phosphate:acyl-[acyl carrier protein] acyltransferase activity"/>
    <property type="evidence" value="ECO:0007669"/>
    <property type="project" value="UniProtKB-UniRule"/>
</dbReference>
<dbReference type="GO" id="GO:0006633">
    <property type="term" value="P:fatty acid biosynthetic process"/>
    <property type="evidence" value="ECO:0007669"/>
    <property type="project" value="UniProtKB-UniRule"/>
</dbReference>
<dbReference type="GO" id="GO:0008654">
    <property type="term" value="P:phospholipid biosynthetic process"/>
    <property type="evidence" value="ECO:0007669"/>
    <property type="project" value="UniProtKB-KW"/>
</dbReference>
<dbReference type="Gene3D" id="3.40.718.10">
    <property type="entry name" value="Isopropylmalate Dehydrogenase"/>
    <property type="match status" value="1"/>
</dbReference>
<dbReference type="HAMAP" id="MF_00019">
    <property type="entry name" value="PlsX"/>
    <property type="match status" value="1"/>
</dbReference>
<dbReference type="InterPro" id="IPR003664">
    <property type="entry name" value="FA_synthesis"/>
</dbReference>
<dbReference type="InterPro" id="IPR012281">
    <property type="entry name" value="Phospholipid_synth_PlsX-like"/>
</dbReference>
<dbReference type="NCBIfam" id="TIGR00182">
    <property type="entry name" value="plsX"/>
    <property type="match status" value="1"/>
</dbReference>
<dbReference type="PANTHER" id="PTHR30100">
    <property type="entry name" value="FATTY ACID/PHOSPHOLIPID SYNTHESIS PROTEIN PLSX"/>
    <property type="match status" value="1"/>
</dbReference>
<dbReference type="PANTHER" id="PTHR30100:SF1">
    <property type="entry name" value="PHOSPHATE ACYLTRANSFERASE"/>
    <property type="match status" value="1"/>
</dbReference>
<dbReference type="Pfam" id="PF02504">
    <property type="entry name" value="FA_synthesis"/>
    <property type="match status" value="1"/>
</dbReference>
<dbReference type="PIRSF" id="PIRSF002465">
    <property type="entry name" value="Phsphlp_syn_PlsX"/>
    <property type="match status" value="1"/>
</dbReference>
<dbReference type="SUPFAM" id="SSF53659">
    <property type="entry name" value="Isocitrate/Isopropylmalate dehydrogenase-like"/>
    <property type="match status" value="1"/>
</dbReference>
<gene>
    <name evidence="1" type="primary">plsX</name>
    <name type="ordered locus">Bamb_0996</name>
</gene>
<sequence>MTVKLTIDCMGGDHGPSVTVPAAVKFVRAHPDAHLMLVGIESAIRAQLKKLKALDDPALTIVPATEVVAMDDPVEVALRKKKDSSMRVALNQVKEGAAQACISAGNTGALMAVSRYVLKTLPGIERPAIAFALPNPTGYTMMLDLGANVDCEPQHLLQFAEMGHALVAALEGKERPTIGLLNIGEEVIKGNETIKRAGELLRASTLNFRGNVEGNDIYKGTVDVIVCDGFVGNVALKTSEGLAQMLSDIIREEFGRSLMSKLMALLALPVLMRFKKRVDHRQYNGAALLGLKGLVIKSHGSADAYAFEWAIKRGYDAVKNGVLERLARAMADNSVSLGDGGHDAGGAGTASPAPGHHAEPSAAQSSKA</sequence>